<feature type="initiator methionine" description="Removed" evidence="5">
    <location>
        <position position="1"/>
    </location>
</feature>
<feature type="chain" id="PRO_0000063233" description="Respiratory nitrate reductase 1 alpha chain">
    <location>
        <begin position="2"/>
        <end position="1247"/>
    </location>
</feature>
<feature type="domain" description="4Fe-4S Mo/W bis-MGD-type" evidence="1">
    <location>
        <begin position="43"/>
        <end position="107"/>
    </location>
</feature>
<feature type="binding site">
    <location>
        <position position="50"/>
    </location>
    <ligand>
        <name>[4Fe-4S] cluster</name>
        <dbReference type="ChEBI" id="CHEBI:49883"/>
    </ligand>
</feature>
<feature type="binding site">
    <location>
        <position position="54"/>
    </location>
    <ligand>
        <name>[4Fe-4S] cluster</name>
        <dbReference type="ChEBI" id="CHEBI:49883"/>
    </ligand>
</feature>
<feature type="binding site">
    <location>
        <position position="58"/>
    </location>
    <ligand>
        <name>[4Fe-4S] cluster</name>
        <dbReference type="ChEBI" id="CHEBI:49883"/>
    </ligand>
</feature>
<feature type="binding site">
    <location>
        <position position="93"/>
    </location>
    <ligand>
        <name>[4Fe-4S] cluster</name>
        <dbReference type="ChEBI" id="CHEBI:49883"/>
    </ligand>
</feature>
<feature type="binding site">
    <location>
        <position position="223"/>
    </location>
    <ligand>
        <name>Mo-bis(molybdopterin guanine dinucleotide)</name>
        <dbReference type="ChEBI" id="CHEBI:60539"/>
    </ligand>
    <ligandPart>
        <name>Mo</name>
        <dbReference type="ChEBI" id="CHEBI:28685"/>
    </ligandPart>
</feature>
<feature type="mutagenesis site" description="Loss of activity." evidence="6">
    <original>H</original>
    <variation>S</variation>
    <location>
        <position position="50"/>
    </location>
</feature>
<feature type="sequence conflict" description="In Ref. 11; AA sequence." evidence="8" ref="11">
    <original>Y</original>
    <variation>K</variation>
    <location>
        <position position="10"/>
    </location>
</feature>
<feature type="helix" evidence="9">
    <location>
        <begin position="3"/>
        <end position="6"/>
    </location>
</feature>
<feature type="helix" evidence="9">
    <location>
        <begin position="7"/>
        <end position="9"/>
    </location>
</feature>
<feature type="helix" evidence="9">
    <location>
        <begin position="11"/>
        <end position="13"/>
    </location>
</feature>
<feature type="strand" evidence="9">
    <location>
        <begin position="14"/>
        <end position="18"/>
    </location>
</feature>
<feature type="turn" evidence="9">
    <location>
        <begin position="19"/>
        <end position="22"/>
    </location>
</feature>
<feature type="strand" evidence="9">
    <location>
        <begin position="23"/>
        <end position="26"/>
    </location>
</feature>
<feature type="helix" evidence="9">
    <location>
        <begin position="31"/>
        <end position="33"/>
    </location>
</feature>
<feature type="helix" evidence="9">
    <location>
        <begin position="34"/>
        <end position="40"/>
    </location>
</feature>
<feature type="strand" evidence="9">
    <location>
        <begin position="43"/>
        <end position="48"/>
    </location>
</feature>
<feature type="strand" evidence="9">
    <location>
        <begin position="52"/>
        <end position="55"/>
    </location>
</feature>
<feature type="strand" evidence="9">
    <location>
        <begin position="60"/>
        <end position="65"/>
    </location>
</feature>
<feature type="strand" evidence="9">
    <location>
        <begin position="68"/>
        <end position="74"/>
    </location>
</feature>
<feature type="helix" evidence="9">
    <location>
        <begin position="94"/>
        <end position="97"/>
    </location>
</feature>
<feature type="helix" evidence="9">
    <location>
        <begin position="98"/>
        <end position="102"/>
    </location>
</feature>
<feature type="strand" evidence="9">
    <location>
        <begin position="113"/>
        <end position="115"/>
    </location>
</feature>
<feature type="helix" evidence="9">
    <location>
        <begin position="116"/>
        <end position="126"/>
    </location>
</feature>
<feature type="helix" evidence="9">
    <location>
        <begin position="132"/>
        <end position="140"/>
    </location>
</feature>
<feature type="helix" evidence="9">
    <location>
        <begin position="143"/>
        <end position="150"/>
    </location>
</feature>
<feature type="turn" evidence="9">
    <location>
        <begin position="151"/>
        <end position="154"/>
    </location>
</feature>
<feature type="strand" evidence="9">
    <location>
        <begin position="158"/>
        <end position="160"/>
    </location>
</feature>
<feature type="helix" evidence="9">
    <location>
        <begin position="163"/>
        <end position="180"/>
    </location>
</feature>
<feature type="helix" evidence="9">
    <location>
        <begin position="183"/>
        <end position="185"/>
    </location>
</feature>
<feature type="strand" evidence="9">
    <location>
        <begin position="186"/>
        <end position="189"/>
    </location>
</feature>
<feature type="helix" evidence="9">
    <location>
        <begin position="193"/>
        <end position="195"/>
    </location>
</feature>
<feature type="helix" evidence="9">
    <location>
        <begin position="197"/>
        <end position="210"/>
    </location>
</feature>
<feature type="strand" evidence="9">
    <location>
        <begin position="213"/>
        <end position="215"/>
    </location>
</feature>
<feature type="turn" evidence="9">
    <location>
        <begin position="218"/>
        <end position="222"/>
    </location>
</feature>
<feature type="helix" evidence="9">
    <location>
        <begin position="227"/>
        <end position="232"/>
    </location>
</feature>
<feature type="helix" evidence="9">
    <location>
        <begin position="241"/>
        <end position="246"/>
    </location>
</feature>
<feature type="strand" evidence="9">
    <location>
        <begin position="248"/>
        <end position="254"/>
    </location>
</feature>
<feature type="helix" evidence="9">
    <location>
        <begin position="257"/>
        <end position="260"/>
    </location>
</feature>
<feature type="helix" evidence="9">
    <location>
        <begin position="262"/>
        <end position="264"/>
    </location>
</feature>
<feature type="helix" evidence="9">
    <location>
        <begin position="265"/>
        <end position="271"/>
    </location>
</feature>
<feature type="helix" evidence="9">
    <location>
        <begin position="272"/>
        <end position="274"/>
    </location>
</feature>
<feature type="strand" evidence="9">
    <location>
        <begin position="277"/>
        <end position="281"/>
    </location>
</feature>
<feature type="helix" evidence="9">
    <location>
        <begin position="287"/>
        <end position="291"/>
    </location>
</feature>
<feature type="strand" evidence="9">
    <location>
        <begin position="292"/>
        <end position="296"/>
    </location>
</feature>
<feature type="turn" evidence="13">
    <location>
        <begin position="300"/>
        <end position="302"/>
    </location>
</feature>
<feature type="helix" evidence="9">
    <location>
        <begin position="303"/>
        <end position="318"/>
    </location>
</feature>
<feature type="turn" evidence="9">
    <location>
        <begin position="319"/>
        <end position="321"/>
    </location>
</feature>
<feature type="helix" evidence="9">
    <location>
        <begin position="325"/>
        <end position="334"/>
    </location>
</feature>
<feature type="strand" evidence="9">
    <location>
        <begin position="339"/>
        <end position="345"/>
    </location>
</feature>
<feature type="strand" evidence="9">
    <location>
        <begin position="347"/>
        <end position="355"/>
    </location>
</feature>
<feature type="helix" evidence="9">
    <location>
        <begin position="358"/>
        <end position="360"/>
    </location>
</feature>
<feature type="strand" evidence="13">
    <location>
        <begin position="361"/>
        <end position="363"/>
    </location>
</feature>
<feature type="helix" evidence="9">
    <location>
        <begin position="364"/>
        <end position="366"/>
    </location>
</feature>
<feature type="helix" evidence="9">
    <location>
        <begin position="371"/>
        <end position="373"/>
    </location>
</feature>
<feature type="strand" evidence="9">
    <location>
        <begin position="377"/>
        <end position="379"/>
    </location>
</feature>
<feature type="helix" evidence="9">
    <location>
        <begin position="391"/>
        <end position="393"/>
    </location>
</feature>
<feature type="strand" evidence="9">
    <location>
        <begin position="395"/>
        <end position="397"/>
    </location>
</feature>
<feature type="strand" evidence="9">
    <location>
        <begin position="405"/>
        <end position="407"/>
    </location>
</feature>
<feature type="turn" evidence="9">
    <location>
        <begin position="408"/>
        <end position="410"/>
    </location>
</feature>
<feature type="turn" evidence="11">
    <location>
        <begin position="421"/>
        <end position="423"/>
    </location>
</feature>
<feature type="strand" evidence="9">
    <location>
        <begin position="425"/>
        <end position="433"/>
    </location>
</feature>
<feature type="strand" evidence="9">
    <location>
        <begin position="450"/>
        <end position="462"/>
    </location>
</feature>
<feature type="strand" evidence="9">
    <location>
        <begin position="468"/>
        <end position="473"/>
    </location>
</feature>
<feature type="helix" evidence="9">
    <location>
        <begin position="474"/>
        <end position="481"/>
    </location>
</feature>
<feature type="strand" evidence="9">
    <location>
        <begin position="493"/>
        <end position="496"/>
    </location>
</feature>
<feature type="helix" evidence="9">
    <location>
        <begin position="505"/>
        <end position="512"/>
    </location>
</feature>
<feature type="helix" evidence="9">
    <location>
        <begin position="516"/>
        <end position="533"/>
    </location>
</feature>
<feature type="strand" evidence="9">
    <location>
        <begin position="537"/>
        <end position="541"/>
    </location>
</feature>
<feature type="helix" evidence="9">
    <location>
        <begin position="543"/>
        <end position="546"/>
    </location>
</feature>
<feature type="helix" evidence="9">
    <location>
        <begin position="551"/>
        <end position="564"/>
    </location>
</feature>
<feature type="strand" evidence="9">
    <location>
        <begin position="574"/>
        <end position="577"/>
    </location>
</feature>
<feature type="helix" evidence="9">
    <location>
        <begin position="587"/>
        <end position="594"/>
    </location>
</feature>
<feature type="turn" evidence="9">
    <location>
        <begin position="595"/>
        <end position="599"/>
    </location>
</feature>
<feature type="strand" evidence="9">
    <location>
        <begin position="604"/>
        <end position="606"/>
    </location>
</feature>
<feature type="helix" evidence="9">
    <location>
        <begin position="608"/>
        <end position="615"/>
    </location>
</feature>
<feature type="helix" evidence="9">
    <location>
        <begin position="618"/>
        <end position="621"/>
    </location>
</feature>
<feature type="helix" evidence="9">
    <location>
        <begin position="627"/>
        <end position="629"/>
    </location>
</feature>
<feature type="helix" evidence="9">
    <location>
        <begin position="636"/>
        <end position="638"/>
    </location>
</feature>
<feature type="helix" evidence="9">
    <location>
        <begin position="643"/>
        <end position="652"/>
    </location>
</feature>
<feature type="strand" evidence="9">
    <location>
        <begin position="662"/>
        <end position="664"/>
    </location>
</feature>
<feature type="turn" evidence="14">
    <location>
        <begin position="666"/>
        <end position="668"/>
    </location>
</feature>
<feature type="helix" evidence="9">
    <location>
        <begin position="669"/>
        <end position="675"/>
    </location>
</feature>
<feature type="helix" evidence="9">
    <location>
        <begin position="680"/>
        <end position="690"/>
    </location>
</feature>
<feature type="strand" evidence="9">
    <location>
        <begin position="691"/>
        <end position="693"/>
    </location>
</feature>
<feature type="helix" evidence="9">
    <location>
        <begin position="696"/>
        <end position="698"/>
    </location>
</feature>
<feature type="strand" evidence="9">
    <location>
        <begin position="702"/>
        <end position="706"/>
    </location>
</feature>
<feature type="strand" evidence="9">
    <location>
        <begin position="709"/>
        <end position="714"/>
    </location>
</feature>
<feature type="turn" evidence="9">
    <location>
        <begin position="717"/>
        <end position="721"/>
    </location>
</feature>
<feature type="strand" evidence="10">
    <location>
        <begin position="722"/>
        <end position="724"/>
    </location>
</feature>
<feature type="helix" evidence="9">
    <location>
        <begin position="725"/>
        <end position="731"/>
    </location>
</feature>
<feature type="turn" evidence="9">
    <location>
        <begin position="744"/>
        <end position="748"/>
    </location>
</feature>
<feature type="strand" evidence="9">
    <location>
        <begin position="753"/>
        <end position="755"/>
    </location>
</feature>
<feature type="strand" evidence="9">
    <location>
        <begin position="767"/>
        <end position="775"/>
    </location>
</feature>
<feature type="helix" evidence="9">
    <location>
        <begin position="778"/>
        <end position="781"/>
    </location>
</feature>
<feature type="strand" evidence="9">
    <location>
        <begin position="784"/>
        <end position="789"/>
    </location>
</feature>
<feature type="strand" evidence="9">
    <location>
        <begin position="797"/>
        <end position="799"/>
    </location>
</feature>
<feature type="strand" evidence="9">
    <location>
        <begin position="805"/>
        <end position="810"/>
    </location>
</feature>
<feature type="strand" evidence="12">
    <location>
        <begin position="813"/>
        <end position="815"/>
    </location>
</feature>
<feature type="helix" evidence="9">
    <location>
        <begin position="823"/>
        <end position="837"/>
    </location>
</feature>
<feature type="turn" evidence="9">
    <location>
        <begin position="838"/>
        <end position="841"/>
    </location>
</feature>
<feature type="strand" evidence="9">
    <location>
        <begin position="844"/>
        <end position="851"/>
    </location>
</feature>
<feature type="helix" evidence="9">
    <location>
        <begin position="858"/>
        <end position="860"/>
    </location>
</feature>
<feature type="strand" evidence="9">
    <location>
        <begin position="864"/>
        <end position="866"/>
    </location>
</feature>
<feature type="helix" evidence="9">
    <location>
        <begin position="870"/>
        <end position="872"/>
    </location>
</feature>
<feature type="turn" evidence="9">
    <location>
        <begin position="879"/>
        <end position="881"/>
    </location>
</feature>
<feature type="strand" evidence="9">
    <location>
        <begin position="885"/>
        <end position="892"/>
    </location>
</feature>
<feature type="helix" evidence="9">
    <location>
        <begin position="893"/>
        <end position="895"/>
    </location>
</feature>
<feature type="helix" evidence="9">
    <location>
        <begin position="896"/>
        <end position="900"/>
    </location>
</feature>
<feature type="helix" evidence="9">
    <location>
        <begin position="906"/>
        <end position="909"/>
    </location>
</feature>
<feature type="strand" evidence="9">
    <location>
        <begin position="912"/>
        <end position="914"/>
    </location>
</feature>
<feature type="strand" evidence="9">
    <location>
        <begin position="917"/>
        <end position="919"/>
    </location>
</feature>
<feature type="helix" evidence="9">
    <location>
        <begin position="922"/>
        <end position="932"/>
    </location>
</feature>
<feature type="strand" evidence="12">
    <location>
        <begin position="936"/>
        <end position="938"/>
    </location>
</feature>
<feature type="turn" evidence="9">
    <location>
        <begin position="939"/>
        <end position="942"/>
    </location>
</feature>
<feature type="strand" evidence="9">
    <location>
        <begin position="943"/>
        <end position="945"/>
    </location>
</feature>
<feature type="helix" evidence="9">
    <location>
        <begin position="949"/>
        <end position="959"/>
    </location>
</feature>
<feature type="turn" evidence="9">
    <location>
        <begin position="961"/>
        <end position="963"/>
    </location>
</feature>
<feature type="helix" evidence="9">
    <location>
        <begin position="965"/>
        <end position="979"/>
    </location>
</feature>
<feature type="helix" evidence="9">
    <location>
        <begin position="984"/>
        <end position="986"/>
    </location>
</feature>
<feature type="helix" evidence="9">
    <location>
        <begin position="988"/>
        <end position="990"/>
    </location>
</feature>
<feature type="helix" evidence="9">
    <location>
        <begin position="997"/>
        <end position="1002"/>
    </location>
</feature>
<feature type="strand" evidence="9">
    <location>
        <begin position="1013"/>
        <end position="1015"/>
    </location>
</feature>
<feature type="strand" evidence="9">
    <location>
        <begin position="1019"/>
        <end position="1021"/>
    </location>
</feature>
<feature type="helix" evidence="9">
    <location>
        <begin position="1027"/>
        <end position="1032"/>
    </location>
</feature>
<feature type="strand" evidence="9">
    <location>
        <begin position="1041"/>
        <end position="1043"/>
    </location>
</feature>
<feature type="helix" evidence="9">
    <location>
        <begin position="1050"/>
        <end position="1054"/>
    </location>
</feature>
<feature type="turn" evidence="9">
    <location>
        <begin position="1072"/>
        <end position="1078"/>
    </location>
</feature>
<feature type="strand" evidence="9">
    <location>
        <begin position="1085"/>
        <end position="1090"/>
    </location>
</feature>
<feature type="strand" evidence="9">
    <location>
        <begin position="1095"/>
        <end position="1098"/>
    </location>
</feature>
<feature type="turn" evidence="9">
    <location>
        <begin position="1102"/>
        <end position="1104"/>
    </location>
</feature>
<feature type="helix" evidence="9">
    <location>
        <begin position="1106"/>
        <end position="1111"/>
    </location>
</feature>
<feature type="strand" evidence="9">
    <location>
        <begin position="1117"/>
        <end position="1121"/>
    </location>
</feature>
<feature type="helix" evidence="9">
    <location>
        <begin position="1122"/>
        <end position="1128"/>
    </location>
</feature>
<feature type="strand" evidence="9">
    <location>
        <begin position="1135"/>
        <end position="1140"/>
    </location>
</feature>
<feature type="strand" evidence="9">
    <location>
        <begin position="1143"/>
        <end position="1152"/>
    </location>
</feature>
<feature type="strand" evidence="9">
    <location>
        <begin position="1159"/>
        <end position="1161"/>
    </location>
</feature>
<feature type="strand" evidence="9">
    <location>
        <begin position="1168"/>
        <end position="1171"/>
    </location>
</feature>
<feature type="turn" evidence="9">
    <location>
        <begin position="1176"/>
        <end position="1178"/>
    </location>
</feature>
<feature type="strand" evidence="9">
    <location>
        <begin position="1179"/>
        <end position="1181"/>
    </location>
</feature>
<feature type="helix" evidence="9">
    <location>
        <begin position="1185"/>
        <end position="1187"/>
    </location>
</feature>
<feature type="helix" evidence="9">
    <location>
        <begin position="1195"/>
        <end position="1197"/>
    </location>
</feature>
<feature type="strand" evidence="9">
    <location>
        <begin position="1205"/>
        <end position="1207"/>
    </location>
</feature>
<feature type="turn" evidence="9">
    <location>
        <begin position="1209"/>
        <end position="1211"/>
    </location>
</feature>
<feature type="strand" evidence="9">
    <location>
        <begin position="1222"/>
        <end position="1227"/>
    </location>
</feature>
<feature type="strand" evidence="9">
    <location>
        <begin position="1229"/>
        <end position="1231"/>
    </location>
</feature>
<feature type="strand" evidence="9">
    <location>
        <begin position="1234"/>
        <end position="1238"/>
    </location>
</feature>
<accession>P09152</accession>
<accession>P78294</accession>
<comment type="function">
    <text>The nitrate reductase enzyme complex allows E.coli to use nitrate as an electron acceptor during anaerobic growth. The alpha chain is the actual site of nitrate reduction.</text>
</comment>
<comment type="catalytic activity">
    <reaction>
        <text>nitrate + a quinol = a quinone + nitrite + H2O</text>
        <dbReference type="Rhea" id="RHEA:56144"/>
        <dbReference type="ChEBI" id="CHEBI:15377"/>
        <dbReference type="ChEBI" id="CHEBI:16301"/>
        <dbReference type="ChEBI" id="CHEBI:17632"/>
        <dbReference type="ChEBI" id="CHEBI:24646"/>
        <dbReference type="ChEBI" id="CHEBI:132124"/>
        <dbReference type="EC" id="1.7.5.1"/>
    </reaction>
</comment>
<comment type="cofactor">
    <cofactor>
        <name>[4Fe-4S] cluster</name>
        <dbReference type="ChEBI" id="CHEBI:49883"/>
    </cofactor>
    <text>Binds 1 [4Fe-4S] cluster per subunit.</text>
</comment>
<comment type="cofactor">
    <cofactor>
        <name>Mo-bis(molybdopterin guanine dinucleotide)</name>
        <dbReference type="ChEBI" id="CHEBI:60539"/>
    </cofactor>
    <text>Binds 1 molybdenum-bis(molybdopterin guanine dinucleotide) (Mo-bis-MGD) cofactor per subunit.</text>
</comment>
<comment type="subunit">
    <text evidence="2 3 4 7">Dimer of heterotrimers each composed of an alpha, a beta and a gamma chain. Alpha and beta are catalytic chains; gamma chains are involved in binding the enzyme complex to the cytoplasmic membrane. Interacts with the NarJ chaperone.</text>
</comment>
<comment type="interaction">
    <interactant intactId="EBI-547248">
        <id>P09152</id>
    </interactant>
    <interactant intactId="EBI-555067">
        <id>P11349</id>
        <label>narH</label>
    </interactant>
    <organismsDiffer>false</organismsDiffer>
    <experiments>13</experiments>
</comment>
<comment type="interaction">
    <interactant intactId="EBI-547248">
        <id>P09152</id>
    </interactant>
    <interactant intactId="EBI-555043">
        <id>P0AF26</id>
        <label>narJ</label>
    </interactant>
    <organismsDiffer>false</organismsDiffer>
    <experiments>18</experiments>
</comment>
<comment type="interaction">
    <interactant intactId="EBI-547248">
        <id>P09152</id>
    </interactant>
    <interactant intactId="EBI-555088">
        <id>P19317</id>
        <label>narW</label>
    </interactant>
    <organismsDiffer>false</organismsDiffer>
    <experiments>9</experiments>
</comment>
<comment type="interaction">
    <interactant intactId="EBI-547248">
        <id>P09152</id>
    </interactant>
    <interactant intactId="EBI-555059">
        <id>P19318</id>
        <label>narY</label>
    </interactant>
    <organismsDiffer>false</organismsDiffer>
    <experiments>5</experiments>
</comment>
<comment type="subcellular location">
    <subcellularLocation>
        <location>Cell membrane</location>
        <topology>Peripheral membrane protein</topology>
    </subcellularLocation>
</comment>
<comment type="induction">
    <text>By nitrate.</text>
</comment>
<comment type="domain">
    <text evidence="2 3">Apoenzyme contains at least 2 NarJ-binding sites, one interfering with membrane anchoring and another being involved in molybdenum insertion. The first binding-site is a short peptide sequence near the N-terminus that contains a twin-arginine homologous motif.</text>
</comment>
<comment type="similarity">
    <text evidence="8">Belongs to the prokaryotic molybdopterin-containing oxidoreductase family.</text>
</comment>
<gene>
    <name type="primary">narG</name>
    <name type="synonym">bisD</name>
    <name type="synonym">narC</name>
    <name type="ordered locus">b1224</name>
    <name type="ordered locus">JW1215</name>
</gene>
<reference key="1">
    <citation type="journal article" date="1989" name="Mol. Gen. Genet.">
        <title>Nitrate reductase of Escherichia coli: completion of the nucleotide sequence of the nar operon and reassessment of the role of the alpha and beta subunits in iron binding and electron transfer.</title>
        <authorList>
            <person name="Blasco F."/>
            <person name="Iobbi C."/>
            <person name="Giordano G."/>
            <person name="Chippaux M."/>
            <person name="Bonnefoy V."/>
        </authorList>
    </citation>
    <scope>NUCLEOTIDE SEQUENCE [GENOMIC DNA]</scope>
    <source>
        <strain>K12 / TG1</strain>
    </source>
</reference>
<reference key="2">
    <citation type="journal article" date="1990" name="Mol. Gen. Genet.">
        <title>Nitrate reductases of Escherichia coli: sequence of the second nitrate reductase and comparison with that encoded by the narGHJI operon.</title>
        <authorList>
            <person name="Blasco F."/>
            <person name="Iobbi C."/>
            <person name="Ratouchniak J."/>
            <person name="Bonnefoy V."/>
            <person name="Chippaux M."/>
        </authorList>
    </citation>
    <scope>NUCLEOTIDE SEQUENCE [GENOMIC DNA]</scope>
    <source>
        <strain>K12 / TG1</strain>
    </source>
</reference>
<reference key="3">
    <citation type="submission" date="1991-07" db="EMBL/GenBank/DDBJ databases">
        <authorList>
            <person name="Blasco F."/>
        </authorList>
    </citation>
    <scope>SEQUENCE REVISION</scope>
    <source>
        <strain>K12 / TG1</strain>
    </source>
</reference>
<reference key="4">
    <citation type="journal article" date="1996" name="DNA Res.">
        <title>A 718-kb DNA sequence of the Escherichia coli K-12 genome corresponding to the 12.7-28.0 min region on the linkage map.</title>
        <authorList>
            <person name="Oshima T."/>
            <person name="Aiba H."/>
            <person name="Baba T."/>
            <person name="Fujita K."/>
            <person name="Hayashi K."/>
            <person name="Honjo A."/>
            <person name="Ikemoto K."/>
            <person name="Inada T."/>
            <person name="Itoh T."/>
            <person name="Kajihara M."/>
            <person name="Kanai K."/>
            <person name="Kashimoto K."/>
            <person name="Kimura S."/>
            <person name="Kitagawa M."/>
            <person name="Makino K."/>
            <person name="Masuda S."/>
            <person name="Miki T."/>
            <person name="Mizobuchi K."/>
            <person name="Mori H."/>
            <person name="Motomura K."/>
            <person name="Nakamura Y."/>
            <person name="Nashimoto H."/>
            <person name="Nishio Y."/>
            <person name="Saito N."/>
            <person name="Sampei G."/>
            <person name="Seki Y."/>
            <person name="Tagami H."/>
            <person name="Takemoto K."/>
            <person name="Wada C."/>
            <person name="Yamamoto Y."/>
            <person name="Yano M."/>
            <person name="Horiuchi T."/>
        </authorList>
    </citation>
    <scope>NUCLEOTIDE SEQUENCE [LARGE SCALE GENOMIC DNA]</scope>
    <source>
        <strain>K12 / W3110 / ATCC 27325 / DSM 5911</strain>
    </source>
</reference>
<reference key="5">
    <citation type="journal article" date="1997" name="Science">
        <title>The complete genome sequence of Escherichia coli K-12.</title>
        <authorList>
            <person name="Blattner F.R."/>
            <person name="Plunkett G. III"/>
            <person name="Bloch C.A."/>
            <person name="Perna N.T."/>
            <person name="Burland V."/>
            <person name="Riley M."/>
            <person name="Collado-Vides J."/>
            <person name="Glasner J.D."/>
            <person name="Rode C.K."/>
            <person name="Mayhew G.F."/>
            <person name="Gregor J."/>
            <person name="Davis N.W."/>
            <person name="Kirkpatrick H.A."/>
            <person name="Goeden M.A."/>
            <person name="Rose D.J."/>
            <person name="Mau B."/>
            <person name="Shao Y."/>
        </authorList>
    </citation>
    <scope>NUCLEOTIDE SEQUENCE [LARGE SCALE GENOMIC DNA]</scope>
    <source>
        <strain>K12 / MG1655 / ATCC 47076</strain>
    </source>
</reference>
<reference key="6">
    <citation type="journal article" date="2006" name="Mol. Syst. Biol.">
        <title>Highly accurate genome sequences of Escherichia coli K-12 strains MG1655 and W3110.</title>
        <authorList>
            <person name="Hayashi K."/>
            <person name="Morooka N."/>
            <person name="Yamamoto Y."/>
            <person name="Fujita K."/>
            <person name="Isono K."/>
            <person name="Choi S."/>
            <person name="Ohtsubo E."/>
            <person name="Baba T."/>
            <person name="Wanner B.L."/>
            <person name="Mori H."/>
            <person name="Horiuchi T."/>
        </authorList>
    </citation>
    <scope>NUCLEOTIDE SEQUENCE [LARGE SCALE GENOMIC DNA]</scope>
    <source>
        <strain>K12 / W3110 / ATCC 27325 / DSM 5911</strain>
    </source>
</reference>
<reference key="7">
    <citation type="journal article" date="1984" name="FEBS Lett.">
        <title>Respiratory nitrate reductase of Escherichia coli. Sequence identification of the large subunit gene.</title>
        <authorList>
            <person name="McPherson M.J."/>
            <person name="Baron A.J."/>
            <person name="Pappin D.J.C."/>
            <person name="Wootton J.C."/>
        </authorList>
    </citation>
    <scope>NUCLEOTIDE SEQUENCE [GENOMIC DNA] OF 1-48</scope>
    <source>
        <strain>K12</strain>
    </source>
</reference>
<reference key="8">
    <citation type="journal article" date="1985" name="J. Bacteriol.">
        <title>Delineation of two distinct regulatory domains in the 5' region of the nar operon of Escherichia coli.</title>
        <authorList>
            <person name="Li S.F."/>
            <person name="Rabi T."/>
            <person name="Demoss J.A."/>
        </authorList>
    </citation>
    <scope>NUCLEOTIDE SEQUENCE [GENOMIC DNA] OF 1-25</scope>
    <source>
        <strain>PK27</strain>
    </source>
</reference>
<reference key="9">
    <citation type="journal article" date="1989" name="FEBS Lett.">
        <title>The narK gene product participates in nitrate transport induced in Escherichia coli nitrate-respiring cells.</title>
        <authorList>
            <person name="Noji S."/>
            <person name="Nohno T."/>
            <person name="Saito T."/>
            <person name="Taniguchi S."/>
        </authorList>
    </citation>
    <scope>NUCLEOTIDE SEQUENCE [GENOMIC DNA] OF 1-23</scope>
    <source>
        <strain>K12</strain>
    </source>
</reference>
<reference key="10">
    <citation type="journal article" date="1987" name="J. Bacteriol.">
        <title>Promoter region of the nar operon of Escherichia coli: nucleotide sequence and transcription initiation signals.</title>
        <authorList>
            <person name="Li S.F."/>
            <person name="Demoss J.A."/>
        </authorList>
    </citation>
    <scope>NUCLEOTIDE SEQUENCE [GENOMIC DNA] OF 1-6</scope>
</reference>
<reference key="11">
    <citation type="journal article" date="1988" name="J. Biol. Chem.">
        <title>Roles of the narJ and narI gene products in the expression of nitrate reductase in Escherichia coli.</title>
        <authorList>
            <person name="Sodergren E.J."/>
            <person name="Hsu P.Y."/>
            <person name="Demoss J.A."/>
        </authorList>
    </citation>
    <scope>PROTEIN SEQUENCE OF 2-11</scope>
</reference>
<reference key="12">
    <citation type="journal article" date="1998" name="Biochemistry">
        <title>Molybdenum cofactor properties and [Fe-S] cluster coordination in Escherichia coli nitrate reductase A: investigation by site-directed mutagenesis of the conserved his-50 residue in the NarG subunit.</title>
        <authorList>
            <person name="Magalon A."/>
            <person name="Asso M."/>
            <person name="Guigliarelli B."/>
            <person name="Rothery R.A."/>
            <person name="Bertrand P."/>
            <person name="Giordano G."/>
            <person name="Blasco F."/>
        </authorList>
    </citation>
    <scope>MUTAGENESIS OF HIS-50</scope>
    <scope>EPR SPECTROSCOPY OF IRON-SULFUR CLUSTERS</scope>
</reference>
<reference key="13">
    <citation type="journal article" date="1998" name="Mol. Microbiol.">
        <title>NarJ is a specific chaperone required for molybdenum cofactor assembly in nitrate reductase A of Escherichia coli.</title>
        <authorList>
            <person name="Blasco F."/>
            <person name="Dos Santos J.P."/>
            <person name="Magalon A."/>
            <person name="Frixon C."/>
            <person name="Guigliarelli B."/>
            <person name="Santini C.L."/>
            <person name="Giordano G."/>
        </authorList>
    </citation>
    <scope>INTERACTION WITH NARJ</scope>
</reference>
<reference key="14">
    <citation type="journal article" date="2006" name="Biochem. Biophys. Res. Commun.">
        <title>Twin-arginine translocase may have a role in the chaperone function of NarJ from Escherichia coli.</title>
        <authorList>
            <person name="Chan C.S."/>
            <person name="Howell J.M."/>
            <person name="Workentine M.L."/>
            <person name="Turner R.J."/>
        </authorList>
    </citation>
    <scope>INTERACTION WITH NARJ</scope>
    <scope>DOMAIN</scope>
</reference>
<reference key="15">
    <citation type="journal article" date="2006" name="J. Biol. Chem.">
        <title>NarJ chaperone binds on two distinct sites of the aponitrate reductase of Escherichia coli to coordinate molybdenum cofactor insertion and assembly.</title>
        <authorList>
            <person name="Vergnes A."/>
            <person name="Pommier J."/>
            <person name="Toci R."/>
            <person name="Blasco F."/>
            <person name="Giordano G."/>
            <person name="Magalon A."/>
        </authorList>
    </citation>
    <scope>INTERACTION WITH NARJ</scope>
    <scope>DOMAIN</scope>
    <source>
        <strain>K12 / MC4100 / JA176</strain>
    </source>
</reference>
<reference key="16">
    <citation type="journal article" date="2010" name="FEBS J.">
        <title>Basis of recognition between the NarJ chaperone and the N-terminus of the NarG subunit from Escherichia coli nitrate reductase.</title>
        <authorList>
            <person name="Zakian S."/>
            <person name="Lafitte D."/>
            <person name="Vergnes A."/>
            <person name="Pimentel C."/>
            <person name="Sebban-Kreuzer C."/>
            <person name="Toci R."/>
            <person name="Claude J.B."/>
            <person name="Guerlesquin F."/>
            <person name="Magalon A."/>
        </authorList>
    </citation>
    <scope>INTERACTION WITH NARJ</scope>
</reference>
<reference key="17">
    <citation type="journal article" date="2003" name="Nat. Struct. Biol.">
        <title>Insights into the respiratory electron transfer pathway from the structure of nitrate reductase A.</title>
        <authorList>
            <person name="Bertero M.G."/>
            <person name="Rothery R.A."/>
            <person name="Palak M."/>
            <person name="Hou C."/>
            <person name="Lim D."/>
            <person name="Blasco F."/>
            <person name="Weiner J.H."/>
            <person name="Strynadka N.C.J."/>
        </authorList>
    </citation>
    <scope>X-RAY CRYSTALLOGRAPHY (1.9 ANGSTROMS)</scope>
</reference>
<reference key="18">
    <citation type="journal article" date="2004" name="Structure">
        <title>Architecture of NarGH reveals a structural classification of Mo-bisMGD enzymes.</title>
        <authorList>
            <person name="Jormakka M."/>
            <person name="Richardson D."/>
            <person name="Byrne B."/>
            <person name="Iwata S."/>
        </authorList>
    </citation>
    <scope>X-RAY CRYSTALLOGRAPHY (2.0 ANGSTROMS) OF 30-1247</scope>
</reference>
<protein>
    <recommendedName>
        <fullName>Respiratory nitrate reductase 1 alpha chain</fullName>
        <ecNumber>1.7.5.1</ecNumber>
    </recommendedName>
    <alternativeName>
        <fullName>Nitrate reductase A subunit alpha</fullName>
    </alternativeName>
    <alternativeName>
        <fullName>Quinol-nitrate oxidoreductase subunit alpha</fullName>
    </alternativeName>
</protein>
<proteinExistence type="evidence at protein level"/>
<sequence length="1247" mass="140489">MSKFLDRFRYFKQKGETFADGHGQLLNTNRDWEDGYRQRWQHDKIVRSTHGVNCTGSCSWKIYVKNGLVTWETQQTDYPRTRPDLPNHEPRGCPRGASYSWYLYSANRLKYPMMRKRLMKMWREAKALHSDPVEAWASIIEDADKAKSFKQARGRGGFVRSSWQEVNELIAASNVYTIKNYGPDRVAGFSPIPAMSMVSYASGARYLSLIGGTCLSFYDWYCDLPPASPQTWGEQTDVPESADWYNSSYIIAWGSNVPQTRTPDAHFFTEVRYKGTKTVAVTPDYAEIAKLCDLWLAPKQGTDAAMALAMGHVMLREFHLDNPSQYFTDYVRRYTDMPMLVMLEERDGYYAAGRMLRAADLVDALGQENNPEWKTVAFNTNGEMVAPNGSIGFRWGEKGKWNLEQRDGKTGEETELQLSLLGSQDEIAEVGFPYFGGDGTEHFNKVELENVLLHKLPVKRLQLADGSTALVTTVYDLTLANYGLERGLNDVNCATSYDDVKAYTPAWAEQITGVSRSQIIRIAREFADNADKTHGRSMIIVGAGLNHWYHLDMNYRGLINMLIFCGCVGQSGGGWAHYVGQEKLRPQTGWQPLAFALDWQRPARHMNSTSYFYNHSSQWRYETVTAEELLSPMADKSRYTGHLIDFNVRAERMGWLPSAPQLGTNPLTIAGEAEKAGMNPVDYTVKSLKEGSIRFAAEQPENGKNHPRNLFIWRSNLLGSSGKGHEFMLKYLLGTEHGIQGKDLGQQGGVKPEEVDWQDNGLEGKLDLVVTLDFRLSSTCLYSDIILPTATWYEKDDMNTSDMHPFIHPLSAAVDPAWEAKSDWEIYKAIAKKFSEVCVGHLGKETDIVTLPIQHDSAAELAQPLDVKDWKKGECDLIPGKTAPHIMVVERDYPATYERFTSIGPLMEKIGNGGKGIAWNTQSEMDLLRKLNYTKAEGPAKGQPMLNTAIDAAEMILTLAPETNGQVAVKAWAALSEFTGRDHTHLALNKEDEKIRFRDIQAQPRKIISSPTWSGLEDEHVSYNAGYTNVHELIPWRTLSGRQQLYQDHQWMRDFGESLLVYRPPIDTRSVKEVIGQKSNGNQEKALNFLTPHQKWGIHSTYSDNLLMLTLGRGGPVVWLSEADAKDLGIADNDWIEVFNSNGALTARAVVSQRVPAGMTMMYHAQERIVNLPGSEITQQRGGIHNSVTRITPKPTHMIGGYAHLAYGFNYYGTVGSNRDEFVVVRKMKNIDWLDGEGNDQVQESVK</sequence>
<dbReference type="EC" id="1.7.5.1"/>
<dbReference type="EMBL" id="X16181">
    <property type="protein sequence ID" value="CAA34303.1"/>
    <property type="molecule type" value="Genomic_DNA"/>
</dbReference>
<dbReference type="EMBL" id="X01164">
    <property type="protein sequence ID" value="CAA25611.1"/>
    <property type="molecule type" value="Genomic_DNA"/>
</dbReference>
<dbReference type="EMBL" id="M11586">
    <property type="protein sequence ID" value="AAA24201.1"/>
    <property type="molecule type" value="Genomic_DNA"/>
</dbReference>
<dbReference type="EMBL" id="U00096">
    <property type="protein sequence ID" value="AAC74308.1"/>
    <property type="molecule type" value="Genomic_DNA"/>
</dbReference>
<dbReference type="EMBL" id="AP009048">
    <property type="protein sequence ID" value="BAA36094.1"/>
    <property type="molecule type" value="Genomic_DNA"/>
</dbReference>
<dbReference type="EMBL" id="X15996">
    <property type="protein sequence ID" value="CAA34127.1"/>
    <property type="molecule type" value="Genomic_DNA"/>
</dbReference>
<dbReference type="EMBL" id="L36649">
    <property type="protein sequence ID" value="AAA64296.1"/>
    <property type="molecule type" value="Genomic_DNA"/>
</dbReference>
<dbReference type="PIR" id="E64869">
    <property type="entry name" value="RDECNA"/>
</dbReference>
<dbReference type="RefSeq" id="NP_415742.1">
    <property type="nucleotide sequence ID" value="NC_000913.3"/>
</dbReference>
<dbReference type="RefSeq" id="WP_000032939.1">
    <property type="nucleotide sequence ID" value="NZ_LN832404.1"/>
</dbReference>
<dbReference type="PDB" id="1Q16">
    <property type="method" value="X-ray"/>
    <property type="resolution" value="1.90 A"/>
    <property type="chains" value="A=1-1247"/>
</dbReference>
<dbReference type="PDB" id="1R27">
    <property type="method" value="X-ray"/>
    <property type="resolution" value="2.00 A"/>
    <property type="chains" value="A/C=2-1247"/>
</dbReference>
<dbReference type="PDB" id="1SIW">
    <property type="method" value="X-ray"/>
    <property type="resolution" value="2.20 A"/>
    <property type="chains" value="A=2-1247"/>
</dbReference>
<dbReference type="PDB" id="1Y4Z">
    <property type="method" value="X-ray"/>
    <property type="resolution" value="2.00 A"/>
    <property type="chains" value="A=2-1247"/>
</dbReference>
<dbReference type="PDB" id="1Y5I">
    <property type="method" value="X-ray"/>
    <property type="resolution" value="1.90 A"/>
    <property type="chains" value="A=2-1247"/>
</dbReference>
<dbReference type="PDB" id="1Y5L">
    <property type="method" value="X-ray"/>
    <property type="resolution" value="2.50 A"/>
    <property type="chains" value="A=2-1247"/>
</dbReference>
<dbReference type="PDB" id="1Y5N">
    <property type="method" value="X-ray"/>
    <property type="resolution" value="2.50 A"/>
    <property type="chains" value="A=2-1247"/>
</dbReference>
<dbReference type="PDB" id="3EGW">
    <property type="method" value="X-ray"/>
    <property type="resolution" value="1.90 A"/>
    <property type="chains" value="A=2-1245"/>
</dbReference>
<dbReference type="PDB" id="3IR5">
    <property type="method" value="X-ray"/>
    <property type="resolution" value="2.30 A"/>
    <property type="chains" value="A=1-1247"/>
</dbReference>
<dbReference type="PDB" id="3IR6">
    <property type="method" value="X-ray"/>
    <property type="resolution" value="2.80 A"/>
    <property type="chains" value="A=1-1247"/>
</dbReference>
<dbReference type="PDB" id="3IR7">
    <property type="method" value="X-ray"/>
    <property type="resolution" value="2.50 A"/>
    <property type="chains" value="A=1-1247"/>
</dbReference>
<dbReference type="PDB" id="8JZD">
    <property type="method" value="X-ray"/>
    <property type="resolution" value="2.45 A"/>
    <property type="chains" value="B/D=1-15"/>
</dbReference>
<dbReference type="PDBsum" id="1Q16"/>
<dbReference type="PDBsum" id="1R27"/>
<dbReference type="PDBsum" id="1SIW"/>
<dbReference type="PDBsum" id="1Y4Z"/>
<dbReference type="PDBsum" id="1Y5I"/>
<dbReference type="PDBsum" id="1Y5L"/>
<dbReference type="PDBsum" id="1Y5N"/>
<dbReference type="PDBsum" id="3EGW"/>
<dbReference type="PDBsum" id="3IR5"/>
<dbReference type="PDBsum" id="3IR6"/>
<dbReference type="PDBsum" id="3IR7"/>
<dbReference type="PDBsum" id="8JZD"/>
<dbReference type="SMR" id="P09152"/>
<dbReference type="BioGRID" id="4263271">
    <property type="interactions" value="74"/>
</dbReference>
<dbReference type="BioGRID" id="850149">
    <property type="interactions" value="5"/>
</dbReference>
<dbReference type="ComplexPortal" id="CPX-1974">
    <property type="entry name" value="Nitrate reductase A complex"/>
</dbReference>
<dbReference type="DIP" id="DIP-10311N"/>
<dbReference type="FunCoup" id="P09152">
    <property type="interactions" value="374"/>
</dbReference>
<dbReference type="IntAct" id="P09152">
    <property type="interactions" value="23"/>
</dbReference>
<dbReference type="MINT" id="P09152"/>
<dbReference type="STRING" id="511145.b1224"/>
<dbReference type="DrugBank" id="DB07349">
    <property type="generic name" value="(1S)-2-{[{[(2S)-2,3-DIHYDROXYPROPYL]OXY}(HYDROXY)PHOSPHORYL]OXY}-1-[(PENTANOYLOXY)METHYL]ETHYL OCTANOATE"/>
</dbReference>
<dbReference type="DrugBank" id="DB04464">
    <property type="generic name" value="N-Formylmethionine"/>
</dbReference>
<dbReference type="TCDB" id="5.A.3.1.1">
    <property type="family name" value="the prokaryotic molybdopterin-containing oxidoreductase (pmo) family"/>
</dbReference>
<dbReference type="jPOST" id="P09152"/>
<dbReference type="PaxDb" id="511145-b1224"/>
<dbReference type="EnsemblBacteria" id="AAC74308">
    <property type="protein sequence ID" value="AAC74308"/>
    <property type="gene ID" value="b1224"/>
</dbReference>
<dbReference type="GeneID" id="945782"/>
<dbReference type="KEGG" id="ecj:JW1215"/>
<dbReference type="KEGG" id="eco:b1224"/>
<dbReference type="KEGG" id="ecoc:C3026_07200"/>
<dbReference type="PATRIC" id="fig|1411691.4.peg.1057"/>
<dbReference type="EchoBASE" id="EB0632"/>
<dbReference type="eggNOG" id="COG5013">
    <property type="taxonomic scope" value="Bacteria"/>
</dbReference>
<dbReference type="HOGENOM" id="CLU_000422_14_1_6"/>
<dbReference type="InParanoid" id="P09152"/>
<dbReference type="OMA" id="VWMSEAD"/>
<dbReference type="OrthoDB" id="9759518at2"/>
<dbReference type="PhylomeDB" id="P09152"/>
<dbReference type="BioCyc" id="EcoCyc:NARG-MONOMER"/>
<dbReference type="BioCyc" id="MetaCyc:NARG-MONOMER"/>
<dbReference type="BRENDA" id="1.7.5.1">
    <property type="organism ID" value="2026"/>
</dbReference>
<dbReference type="EvolutionaryTrace" id="P09152"/>
<dbReference type="PHI-base" id="PHI:10512"/>
<dbReference type="PRO" id="PR:P09152"/>
<dbReference type="Proteomes" id="UP000000625">
    <property type="component" value="Chromosome"/>
</dbReference>
<dbReference type="GO" id="GO:0016020">
    <property type="term" value="C:membrane"/>
    <property type="evidence" value="ECO:0000314"/>
    <property type="project" value="ComplexPortal"/>
</dbReference>
<dbReference type="GO" id="GO:0044799">
    <property type="term" value="C:NarGHI complex"/>
    <property type="evidence" value="ECO:0000314"/>
    <property type="project" value="EcoCyc"/>
</dbReference>
<dbReference type="GO" id="GO:0051539">
    <property type="term" value="F:4 iron, 4 sulfur cluster binding"/>
    <property type="evidence" value="ECO:0000314"/>
    <property type="project" value="EcoCyc"/>
</dbReference>
<dbReference type="GO" id="GO:0009055">
    <property type="term" value="F:electron transfer activity"/>
    <property type="evidence" value="ECO:0000314"/>
    <property type="project" value="EcoCyc"/>
</dbReference>
<dbReference type="GO" id="GO:0046872">
    <property type="term" value="F:metal ion binding"/>
    <property type="evidence" value="ECO:0007669"/>
    <property type="project" value="UniProtKB-KW"/>
</dbReference>
<dbReference type="GO" id="GO:0043546">
    <property type="term" value="F:molybdopterin cofactor binding"/>
    <property type="evidence" value="ECO:0000314"/>
    <property type="project" value="EcoCyc"/>
</dbReference>
<dbReference type="GO" id="GO:0160182">
    <property type="term" value="F:nitrate reductase (quinone) activity"/>
    <property type="evidence" value="ECO:0007669"/>
    <property type="project" value="UniProtKB-EC"/>
</dbReference>
<dbReference type="GO" id="GO:0008940">
    <property type="term" value="F:nitrate reductase activity"/>
    <property type="evidence" value="ECO:0000314"/>
    <property type="project" value="EcoCyc"/>
</dbReference>
<dbReference type="GO" id="GO:0019645">
    <property type="term" value="P:anaerobic electron transport chain"/>
    <property type="evidence" value="ECO:0000314"/>
    <property type="project" value="ComplexPortal"/>
</dbReference>
<dbReference type="GO" id="GO:0009061">
    <property type="term" value="P:anaerobic respiration"/>
    <property type="evidence" value="ECO:0000270"/>
    <property type="project" value="EcoCyc"/>
</dbReference>
<dbReference type="GO" id="GO:0042128">
    <property type="term" value="P:nitrate assimilation"/>
    <property type="evidence" value="ECO:0007669"/>
    <property type="project" value="UniProtKB-KW"/>
</dbReference>
<dbReference type="GO" id="GO:0042126">
    <property type="term" value="P:nitrate metabolic process"/>
    <property type="evidence" value="ECO:0000314"/>
    <property type="project" value="ComplexPortal"/>
</dbReference>
<dbReference type="CDD" id="cd02776">
    <property type="entry name" value="MopB_CT_Nitrate-R-NarG-like"/>
    <property type="match status" value="1"/>
</dbReference>
<dbReference type="CDD" id="cd02750">
    <property type="entry name" value="MopB_Nitrate-R-NarG-like"/>
    <property type="match status" value="1"/>
</dbReference>
<dbReference type="FunFam" id="3.40.50.12440:FF:000001">
    <property type="entry name" value="Nitrate reductase subunit alpha"/>
    <property type="match status" value="1"/>
</dbReference>
<dbReference type="FunFam" id="4.10.1200.10:FF:000001">
    <property type="entry name" value="Respiratory nitrate reductase subunit alpha"/>
    <property type="match status" value="1"/>
</dbReference>
<dbReference type="Gene3D" id="3.40.50.12440">
    <property type="match status" value="1"/>
</dbReference>
<dbReference type="Gene3D" id="4.10.1200.10">
    <property type="entry name" value="nitrate reductase tail"/>
    <property type="match status" value="1"/>
</dbReference>
<dbReference type="InterPro" id="IPR009010">
    <property type="entry name" value="Asp_de-COase-like_dom_sf"/>
</dbReference>
<dbReference type="InterPro" id="IPR037943">
    <property type="entry name" value="MopB_CT_Nitrate-R-NarG-like"/>
</dbReference>
<dbReference type="InterPro" id="IPR006657">
    <property type="entry name" value="MoPterin_dinucl-bd_dom"/>
</dbReference>
<dbReference type="InterPro" id="IPR006656">
    <property type="entry name" value="Mopterin_OxRdtase"/>
</dbReference>
<dbReference type="InterPro" id="IPR006963">
    <property type="entry name" value="Mopterin_OxRdtase_4Fe-4S_dom"/>
</dbReference>
<dbReference type="InterPro" id="IPR006655">
    <property type="entry name" value="Mopterin_OxRdtase_prok_CS"/>
</dbReference>
<dbReference type="InterPro" id="IPR027467">
    <property type="entry name" value="MopterinOxRdtase_cofactor_BS"/>
</dbReference>
<dbReference type="InterPro" id="IPR006468">
    <property type="entry name" value="NarG"/>
</dbReference>
<dbReference type="InterPro" id="IPR028189">
    <property type="entry name" value="Nitr_red_alph_N"/>
</dbReference>
<dbReference type="InterPro" id="IPR044906">
    <property type="entry name" value="Nitr_red_alph_N_sf"/>
</dbReference>
<dbReference type="InterPro" id="IPR050123">
    <property type="entry name" value="Prok_molybdopt-oxidoreductase"/>
</dbReference>
<dbReference type="NCBIfam" id="TIGR01580">
    <property type="entry name" value="narG"/>
    <property type="match status" value="1"/>
</dbReference>
<dbReference type="PANTHER" id="PTHR43105">
    <property type="entry name" value="RESPIRATORY NITRATE REDUCTASE"/>
    <property type="match status" value="1"/>
</dbReference>
<dbReference type="PANTHER" id="PTHR43105:SF8">
    <property type="entry name" value="RESPIRATORY NITRATE REDUCTASE 1 ALPHA CHAIN"/>
    <property type="match status" value="1"/>
</dbReference>
<dbReference type="Pfam" id="PF00384">
    <property type="entry name" value="Molybdopterin"/>
    <property type="match status" value="1"/>
</dbReference>
<dbReference type="Pfam" id="PF01568">
    <property type="entry name" value="Molydop_binding"/>
    <property type="match status" value="1"/>
</dbReference>
<dbReference type="Pfam" id="PF14710">
    <property type="entry name" value="Nitr_red_alph_N"/>
    <property type="match status" value="1"/>
</dbReference>
<dbReference type="SMART" id="SM00926">
    <property type="entry name" value="Molybdop_Fe4S4"/>
    <property type="match status" value="1"/>
</dbReference>
<dbReference type="SUPFAM" id="SSF50692">
    <property type="entry name" value="ADC-like"/>
    <property type="match status" value="1"/>
</dbReference>
<dbReference type="SUPFAM" id="SSF53706">
    <property type="entry name" value="Formate dehydrogenase/DMSO reductase, domains 1-3"/>
    <property type="match status" value="1"/>
</dbReference>
<dbReference type="PROSITE" id="PS51669">
    <property type="entry name" value="4FE4S_MOW_BIS_MGD"/>
    <property type="match status" value="1"/>
</dbReference>
<dbReference type="PROSITE" id="PS00551">
    <property type="entry name" value="MOLYBDOPTERIN_PROK_1"/>
    <property type="match status" value="1"/>
</dbReference>
<dbReference type="PROSITE" id="PS00490">
    <property type="entry name" value="MOLYBDOPTERIN_PROK_2"/>
    <property type="match status" value="1"/>
</dbReference>
<dbReference type="PROSITE" id="PS00932">
    <property type="entry name" value="MOLYBDOPTERIN_PROK_3"/>
    <property type="match status" value="1"/>
</dbReference>
<organism>
    <name type="scientific">Escherichia coli (strain K12)</name>
    <dbReference type="NCBI Taxonomy" id="83333"/>
    <lineage>
        <taxon>Bacteria</taxon>
        <taxon>Pseudomonadati</taxon>
        <taxon>Pseudomonadota</taxon>
        <taxon>Gammaproteobacteria</taxon>
        <taxon>Enterobacterales</taxon>
        <taxon>Enterobacteriaceae</taxon>
        <taxon>Escherichia</taxon>
    </lineage>
</organism>
<name>NARG_ECOLI</name>
<evidence type="ECO:0000255" key="1">
    <source>
        <dbReference type="PROSITE-ProRule" id="PRU01004"/>
    </source>
</evidence>
<evidence type="ECO:0000269" key="2">
    <source>
    </source>
</evidence>
<evidence type="ECO:0000269" key="3">
    <source>
    </source>
</evidence>
<evidence type="ECO:0000269" key="4">
    <source>
    </source>
</evidence>
<evidence type="ECO:0000269" key="5">
    <source>
    </source>
</evidence>
<evidence type="ECO:0000269" key="6">
    <source>
    </source>
</evidence>
<evidence type="ECO:0000269" key="7">
    <source>
    </source>
</evidence>
<evidence type="ECO:0000305" key="8"/>
<evidence type="ECO:0007829" key="9">
    <source>
        <dbReference type="PDB" id="1Q16"/>
    </source>
</evidence>
<evidence type="ECO:0007829" key="10">
    <source>
        <dbReference type="PDB" id="1R27"/>
    </source>
</evidence>
<evidence type="ECO:0007829" key="11">
    <source>
        <dbReference type="PDB" id="1SIW"/>
    </source>
</evidence>
<evidence type="ECO:0007829" key="12">
    <source>
        <dbReference type="PDB" id="1Y5L"/>
    </source>
</evidence>
<evidence type="ECO:0007829" key="13">
    <source>
        <dbReference type="PDB" id="1Y5N"/>
    </source>
</evidence>
<evidence type="ECO:0007829" key="14">
    <source>
        <dbReference type="PDB" id="3EGW"/>
    </source>
</evidence>
<keyword id="KW-0002">3D-structure</keyword>
<keyword id="KW-0004">4Fe-4S</keyword>
<keyword id="KW-1003">Cell membrane</keyword>
<keyword id="KW-0903">Direct protein sequencing</keyword>
<keyword id="KW-0249">Electron transport</keyword>
<keyword id="KW-0408">Iron</keyword>
<keyword id="KW-0411">Iron-sulfur</keyword>
<keyword id="KW-0472">Membrane</keyword>
<keyword id="KW-0479">Metal-binding</keyword>
<keyword id="KW-0500">Molybdenum</keyword>
<keyword id="KW-0534">Nitrate assimilation</keyword>
<keyword id="KW-0560">Oxidoreductase</keyword>
<keyword id="KW-1185">Reference proteome</keyword>
<keyword id="KW-0813">Transport</keyword>